<comment type="function">
    <text evidence="1">Transaldolase is important for the balance of metabolites in the pentose-phosphate pathway.</text>
</comment>
<comment type="catalytic activity">
    <reaction>
        <text>D-sedoheptulose 7-phosphate + D-glyceraldehyde 3-phosphate = D-erythrose 4-phosphate + beta-D-fructose 6-phosphate</text>
        <dbReference type="Rhea" id="RHEA:17053"/>
        <dbReference type="ChEBI" id="CHEBI:16897"/>
        <dbReference type="ChEBI" id="CHEBI:57483"/>
        <dbReference type="ChEBI" id="CHEBI:57634"/>
        <dbReference type="ChEBI" id="CHEBI:59776"/>
        <dbReference type="EC" id="2.2.1.2"/>
    </reaction>
</comment>
<comment type="pathway">
    <text>Carbohydrate degradation; pentose phosphate pathway; D-glyceraldehyde 3-phosphate and beta-D-fructose 6-phosphate from D-ribose 5-phosphate and D-xylulose 5-phosphate (non-oxidative stage): step 2/3.</text>
</comment>
<comment type="subcellular location">
    <subcellularLocation>
        <location evidence="1">Cytoplasm</location>
    </subcellularLocation>
</comment>
<comment type="similarity">
    <text evidence="2">Belongs to the transaldolase family. Type 3B subfamily.</text>
</comment>
<organism>
    <name type="scientific">Streptococcus pyogenes serotype M18 (strain MGAS8232)</name>
    <dbReference type="NCBI Taxonomy" id="186103"/>
    <lineage>
        <taxon>Bacteria</taxon>
        <taxon>Bacillati</taxon>
        <taxon>Bacillota</taxon>
        <taxon>Bacilli</taxon>
        <taxon>Lactobacillales</taxon>
        <taxon>Streptococcaceae</taxon>
        <taxon>Streptococcus</taxon>
    </lineage>
</organism>
<keyword id="KW-0963">Cytoplasm</keyword>
<keyword id="KW-0570">Pentose shunt</keyword>
<keyword id="KW-0704">Schiff base</keyword>
<keyword id="KW-0808">Transferase</keyword>
<accession>P66961</accession>
<accession>Q99YJ2</accession>
<reference key="1">
    <citation type="journal article" date="2002" name="Proc. Natl. Acad. Sci. U.S.A.">
        <title>Genome sequence and comparative microarray analysis of serotype M18 group A Streptococcus strains associated with acute rheumatic fever outbreaks.</title>
        <authorList>
            <person name="Smoot J.C."/>
            <person name="Barbian K.D."/>
            <person name="Van Gompel J.J."/>
            <person name="Smoot L.M."/>
            <person name="Chaussee M.S."/>
            <person name="Sylva G.L."/>
            <person name="Sturdevant D.E."/>
            <person name="Ricklefs S.M."/>
            <person name="Porcella S.F."/>
            <person name="Parkins L.D."/>
            <person name="Beres S.B."/>
            <person name="Campbell D.S."/>
            <person name="Smith T.M."/>
            <person name="Zhang Q."/>
            <person name="Kapur V."/>
            <person name="Daly J.A."/>
            <person name="Veasy L.G."/>
            <person name="Musser J.M."/>
        </authorList>
    </citation>
    <scope>NUCLEOTIDE SEQUENCE [LARGE SCALE GENOMIC DNA]</scope>
    <source>
        <strain>MGAS8232</strain>
    </source>
</reference>
<protein>
    <recommendedName>
        <fullName>Probable transaldolase</fullName>
        <ecNumber>2.2.1.2</ecNumber>
    </recommendedName>
</protein>
<feature type="chain" id="PRO_0000173686" description="Probable transaldolase">
    <location>
        <begin position="1"/>
        <end position="214"/>
    </location>
</feature>
<feature type="active site" description="Schiff-base intermediate with substrate" evidence="1">
    <location>
        <position position="83"/>
    </location>
</feature>
<gene>
    <name type="primary">tal</name>
    <name type="ordered locus">spyM18_1689</name>
</gene>
<sequence>MKFFLDTANVAAIKAINELGVVDGVTTNPTIISREGRDFETVIKEICDIVDGPISAEVTGLTADAMVEEARSIAKWHDNVVVKIPMTTEGLKATNILSKEGIKTNVTLIFTVSQGLMAMKAGATYISPFIGRLEDIGTDAYQLISDLREIIDLYDFQAEIIAASIRTTAHVEAVAKLGAHIATIPDPLFAKMTQHPLTTNGLKTFMEDWASFKK</sequence>
<dbReference type="EC" id="2.2.1.2"/>
<dbReference type="EMBL" id="AE009949">
    <property type="protein sequence ID" value="AAL98226.1"/>
    <property type="molecule type" value="Genomic_DNA"/>
</dbReference>
<dbReference type="SMR" id="P66961"/>
<dbReference type="KEGG" id="spm:spyM18_1689"/>
<dbReference type="HOGENOM" id="CLU_079764_0_0_9"/>
<dbReference type="UniPathway" id="UPA00115">
    <property type="reaction ID" value="UER00414"/>
</dbReference>
<dbReference type="GO" id="GO:0005737">
    <property type="term" value="C:cytoplasm"/>
    <property type="evidence" value="ECO:0007669"/>
    <property type="project" value="UniProtKB-SubCell"/>
</dbReference>
<dbReference type="GO" id="GO:0016832">
    <property type="term" value="F:aldehyde-lyase activity"/>
    <property type="evidence" value="ECO:0007669"/>
    <property type="project" value="InterPro"/>
</dbReference>
<dbReference type="GO" id="GO:0004801">
    <property type="term" value="F:transaldolase activity"/>
    <property type="evidence" value="ECO:0007669"/>
    <property type="project" value="UniProtKB-UniRule"/>
</dbReference>
<dbReference type="GO" id="GO:0005975">
    <property type="term" value="P:carbohydrate metabolic process"/>
    <property type="evidence" value="ECO:0007669"/>
    <property type="project" value="InterPro"/>
</dbReference>
<dbReference type="GO" id="GO:0006098">
    <property type="term" value="P:pentose-phosphate shunt"/>
    <property type="evidence" value="ECO:0007669"/>
    <property type="project" value="UniProtKB-UniRule"/>
</dbReference>
<dbReference type="CDD" id="cd00956">
    <property type="entry name" value="Transaldolase_FSA"/>
    <property type="match status" value="1"/>
</dbReference>
<dbReference type="FunFam" id="3.20.20.70:FF:000018">
    <property type="entry name" value="Probable transaldolase"/>
    <property type="match status" value="1"/>
</dbReference>
<dbReference type="Gene3D" id="3.20.20.70">
    <property type="entry name" value="Aldolase class I"/>
    <property type="match status" value="1"/>
</dbReference>
<dbReference type="HAMAP" id="MF_00494">
    <property type="entry name" value="Transaldolase_3b"/>
    <property type="match status" value="1"/>
</dbReference>
<dbReference type="InterPro" id="IPR013785">
    <property type="entry name" value="Aldolase_TIM"/>
</dbReference>
<dbReference type="InterPro" id="IPR001585">
    <property type="entry name" value="TAL/FSA"/>
</dbReference>
<dbReference type="InterPro" id="IPR022999">
    <property type="entry name" value="Transaldolase_3B"/>
</dbReference>
<dbReference type="InterPro" id="IPR004731">
    <property type="entry name" value="Transaldolase_3B/F6P_aldolase"/>
</dbReference>
<dbReference type="InterPro" id="IPR018225">
    <property type="entry name" value="Transaldolase_AS"/>
</dbReference>
<dbReference type="InterPro" id="IPR033919">
    <property type="entry name" value="TSA/FSA_arc/bac"/>
</dbReference>
<dbReference type="NCBIfam" id="TIGR00875">
    <property type="entry name" value="fsa_talC_mipB"/>
    <property type="match status" value="1"/>
</dbReference>
<dbReference type="PANTHER" id="PTHR10683">
    <property type="entry name" value="TRANSALDOLASE"/>
    <property type="match status" value="1"/>
</dbReference>
<dbReference type="PANTHER" id="PTHR10683:SF36">
    <property type="entry name" value="TRANSALDOLASE"/>
    <property type="match status" value="1"/>
</dbReference>
<dbReference type="Pfam" id="PF00923">
    <property type="entry name" value="TAL_FSA"/>
    <property type="match status" value="1"/>
</dbReference>
<dbReference type="SUPFAM" id="SSF51569">
    <property type="entry name" value="Aldolase"/>
    <property type="match status" value="1"/>
</dbReference>
<dbReference type="PROSITE" id="PS01054">
    <property type="entry name" value="TRANSALDOLASE_1"/>
    <property type="match status" value="1"/>
</dbReference>
<dbReference type="PROSITE" id="PS00958">
    <property type="entry name" value="TRANSALDOLASE_2"/>
    <property type="match status" value="1"/>
</dbReference>
<proteinExistence type="inferred from homology"/>
<name>TAL_STRP8</name>
<evidence type="ECO:0000250" key="1"/>
<evidence type="ECO:0000305" key="2"/>